<keyword id="KW-0025">Alternative splicing</keyword>
<keyword id="KW-0119">Carbohydrate metabolism</keyword>
<keyword id="KW-0963">Cytoplasm</keyword>
<keyword id="KW-0326">Glycosidase</keyword>
<keyword id="KW-0378">Hydrolase</keyword>
<keyword id="KW-0624">Polysaccharide degradation</keyword>
<keyword id="KW-1185">Reference proteome</keyword>
<gene>
    <name type="primary">BAM5</name>
    <name type="synonym">BMY1</name>
    <name type="synonym">RAM1</name>
    <name type="ordered locus">At4g15210</name>
    <name type="ORF">dl3650c</name>
    <name type="ORF">FCAALL.97</name>
</gene>
<reference key="1">
    <citation type="journal article" date="1991" name="Plant Physiol.">
        <title>Nucleotide sequence of a cDNA clone encoding a beta-amylase from Arabidopsis thaliana.</title>
        <authorList>
            <person name="Monroe J.D."/>
            <person name="Salminen M.D."/>
            <person name="Preiss J."/>
        </authorList>
    </citation>
    <scope>NUCLEOTIDE SEQUENCE [MRNA] (ISOFORM 1)</scope>
</reference>
<reference key="2">
    <citation type="journal article" date="1995" name="Plant Physiol.">
        <title>Sugar-inducible expression of a gene for beta-amylase in Arabidopsis thaliana.</title>
        <authorList>
            <person name="Mita S."/>
            <person name="Suzuki-Fujii K."/>
            <person name="Nakamura K."/>
        </authorList>
    </citation>
    <scope>NUCLEOTIDE SEQUENCE [GENOMIC DNA]</scope>
    <source>
        <strain>cv. Landsberg erecta</strain>
    </source>
</reference>
<reference key="3">
    <citation type="journal article" date="1998" name="Nature">
        <title>Analysis of 1.9 Mb of contiguous sequence from chromosome 4 of Arabidopsis thaliana.</title>
        <authorList>
            <person name="Bevan M."/>
            <person name="Bancroft I."/>
            <person name="Bent E."/>
            <person name="Love K."/>
            <person name="Goodman H.M."/>
            <person name="Dean C."/>
            <person name="Bergkamp R."/>
            <person name="Dirkse W."/>
            <person name="van Staveren M."/>
            <person name="Stiekema W."/>
            <person name="Drost L."/>
            <person name="Ridley P."/>
            <person name="Hudson S.-A."/>
            <person name="Patel K."/>
            <person name="Murphy G."/>
            <person name="Piffanelli P."/>
            <person name="Wedler H."/>
            <person name="Wedler E."/>
            <person name="Wambutt R."/>
            <person name="Weitzenegger T."/>
            <person name="Pohl T."/>
            <person name="Terryn N."/>
            <person name="Gielen J."/>
            <person name="Villarroel R."/>
            <person name="De Clercq R."/>
            <person name="van Montagu M."/>
            <person name="Lecharny A."/>
            <person name="Aubourg S."/>
            <person name="Gy I."/>
            <person name="Kreis M."/>
            <person name="Lao N."/>
            <person name="Kavanagh T."/>
            <person name="Hempel S."/>
            <person name="Kotter P."/>
            <person name="Entian K.-D."/>
            <person name="Rieger M."/>
            <person name="Schaefer M."/>
            <person name="Funk B."/>
            <person name="Mueller-Auer S."/>
            <person name="Silvey M."/>
            <person name="James R."/>
            <person name="Monfort A."/>
            <person name="Pons A."/>
            <person name="Puigdomenech P."/>
            <person name="Douka A."/>
            <person name="Voukelatou E."/>
            <person name="Milioni D."/>
            <person name="Hatzopoulos P."/>
            <person name="Piravandi E."/>
            <person name="Obermaier B."/>
            <person name="Hilbert H."/>
            <person name="Duesterhoeft A."/>
            <person name="Moores T."/>
            <person name="Jones J.D.G."/>
            <person name="Eneva T."/>
            <person name="Palme K."/>
            <person name="Benes V."/>
            <person name="Rechmann S."/>
            <person name="Ansorge W."/>
            <person name="Cooke R."/>
            <person name="Berger C."/>
            <person name="Delseny M."/>
            <person name="Voet M."/>
            <person name="Volckaert G."/>
            <person name="Mewes H.-W."/>
            <person name="Klosterman S."/>
            <person name="Schueller C."/>
            <person name="Chalwatzis N."/>
        </authorList>
    </citation>
    <scope>NUCLEOTIDE SEQUENCE [LARGE SCALE GENOMIC DNA]</scope>
    <source>
        <strain>cv. Columbia</strain>
    </source>
</reference>
<reference key="4">
    <citation type="journal article" date="1999" name="Nature">
        <title>Sequence and analysis of chromosome 4 of the plant Arabidopsis thaliana.</title>
        <authorList>
            <person name="Mayer K.F.X."/>
            <person name="Schueller C."/>
            <person name="Wambutt R."/>
            <person name="Murphy G."/>
            <person name="Volckaert G."/>
            <person name="Pohl T."/>
            <person name="Duesterhoeft A."/>
            <person name="Stiekema W."/>
            <person name="Entian K.-D."/>
            <person name="Terryn N."/>
            <person name="Harris B."/>
            <person name="Ansorge W."/>
            <person name="Brandt P."/>
            <person name="Grivell L.A."/>
            <person name="Rieger M."/>
            <person name="Weichselgartner M."/>
            <person name="de Simone V."/>
            <person name="Obermaier B."/>
            <person name="Mache R."/>
            <person name="Mueller M."/>
            <person name="Kreis M."/>
            <person name="Delseny M."/>
            <person name="Puigdomenech P."/>
            <person name="Watson M."/>
            <person name="Schmidtheini T."/>
            <person name="Reichert B."/>
            <person name="Portetelle D."/>
            <person name="Perez-Alonso M."/>
            <person name="Boutry M."/>
            <person name="Bancroft I."/>
            <person name="Vos P."/>
            <person name="Hoheisel J."/>
            <person name="Zimmermann W."/>
            <person name="Wedler H."/>
            <person name="Ridley P."/>
            <person name="Langham S.-A."/>
            <person name="McCullagh B."/>
            <person name="Bilham L."/>
            <person name="Robben J."/>
            <person name="van der Schueren J."/>
            <person name="Grymonprez B."/>
            <person name="Chuang Y.-J."/>
            <person name="Vandenbussche F."/>
            <person name="Braeken M."/>
            <person name="Weltjens I."/>
            <person name="Voet M."/>
            <person name="Bastiaens I."/>
            <person name="Aert R."/>
            <person name="Defoor E."/>
            <person name="Weitzenegger T."/>
            <person name="Bothe G."/>
            <person name="Ramsperger U."/>
            <person name="Hilbert H."/>
            <person name="Braun M."/>
            <person name="Holzer E."/>
            <person name="Brandt A."/>
            <person name="Peters S."/>
            <person name="van Staveren M."/>
            <person name="Dirkse W."/>
            <person name="Mooijman P."/>
            <person name="Klein Lankhorst R."/>
            <person name="Rose M."/>
            <person name="Hauf J."/>
            <person name="Koetter P."/>
            <person name="Berneiser S."/>
            <person name="Hempel S."/>
            <person name="Feldpausch M."/>
            <person name="Lamberth S."/>
            <person name="Van den Daele H."/>
            <person name="De Keyser A."/>
            <person name="Buysshaert C."/>
            <person name="Gielen J."/>
            <person name="Villarroel R."/>
            <person name="De Clercq R."/>
            <person name="van Montagu M."/>
            <person name="Rogers J."/>
            <person name="Cronin A."/>
            <person name="Quail M.A."/>
            <person name="Bray-Allen S."/>
            <person name="Clark L."/>
            <person name="Doggett J."/>
            <person name="Hall S."/>
            <person name="Kay M."/>
            <person name="Lennard N."/>
            <person name="McLay K."/>
            <person name="Mayes R."/>
            <person name="Pettett A."/>
            <person name="Rajandream M.A."/>
            <person name="Lyne M."/>
            <person name="Benes V."/>
            <person name="Rechmann S."/>
            <person name="Borkova D."/>
            <person name="Bloecker H."/>
            <person name="Scharfe M."/>
            <person name="Grimm M."/>
            <person name="Loehnert T.-H."/>
            <person name="Dose S."/>
            <person name="de Haan M."/>
            <person name="Maarse A.C."/>
            <person name="Schaefer M."/>
            <person name="Mueller-Auer S."/>
            <person name="Gabel C."/>
            <person name="Fuchs M."/>
            <person name="Fartmann B."/>
            <person name="Granderath K."/>
            <person name="Dauner D."/>
            <person name="Herzl A."/>
            <person name="Neumann S."/>
            <person name="Argiriou A."/>
            <person name="Vitale D."/>
            <person name="Liguori R."/>
            <person name="Piravandi E."/>
            <person name="Massenet O."/>
            <person name="Quigley F."/>
            <person name="Clabauld G."/>
            <person name="Muendlein A."/>
            <person name="Felber R."/>
            <person name="Schnabl S."/>
            <person name="Hiller R."/>
            <person name="Schmidt W."/>
            <person name="Lecharny A."/>
            <person name="Aubourg S."/>
            <person name="Chefdor F."/>
            <person name="Cooke R."/>
            <person name="Berger C."/>
            <person name="Monfort A."/>
            <person name="Casacuberta E."/>
            <person name="Gibbons T."/>
            <person name="Weber N."/>
            <person name="Vandenbol M."/>
            <person name="Bargues M."/>
            <person name="Terol J."/>
            <person name="Torres A."/>
            <person name="Perez-Perez A."/>
            <person name="Purnelle B."/>
            <person name="Bent E."/>
            <person name="Johnson S."/>
            <person name="Tacon D."/>
            <person name="Jesse T."/>
            <person name="Heijnen L."/>
            <person name="Schwarz S."/>
            <person name="Scholler P."/>
            <person name="Heber S."/>
            <person name="Francs P."/>
            <person name="Bielke C."/>
            <person name="Frishman D."/>
            <person name="Haase D."/>
            <person name="Lemcke K."/>
            <person name="Mewes H.-W."/>
            <person name="Stocker S."/>
            <person name="Zaccaria P."/>
            <person name="Bevan M."/>
            <person name="Wilson R.K."/>
            <person name="de la Bastide M."/>
            <person name="Habermann K."/>
            <person name="Parnell L."/>
            <person name="Dedhia N."/>
            <person name="Gnoj L."/>
            <person name="Schutz K."/>
            <person name="Huang E."/>
            <person name="Spiegel L."/>
            <person name="Sekhon M."/>
            <person name="Murray J."/>
            <person name="Sheet P."/>
            <person name="Cordes M."/>
            <person name="Abu-Threideh J."/>
            <person name="Stoneking T."/>
            <person name="Kalicki J."/>
            <person name="Graves T."/>
            <person name="Harmon G."/>
            <person name="Edwards J."/>
            <person name="Latreille P."/>
            <person name="Courtney L."/>
            <person name="Cloud J."/>
            <person name="Abbott A."/>
            <person name="Scott K."/>
            <person name="Johnson D."/>
            <person name="Minx P."/>
            <person name="Bentley D."/>
            <person name="Fulton B."/>
            <person name="Miller N."/>
            <person name="Greco T."/>
            <person name="Kemp K."/>
            <person name="Kramer J."/>
            <person name="Fulton L."/>
            <person name="Mardis E."/>
            <person name="Dante M."/>
            <person name="Pepin K."/>
            <person name="Hillier L.W."/>
            <person name="Nelson J."/>
            <person name="Spieth J."/>
            <person name="Ryan E."/>
            <person name="Andrews S."/>
            <person name="Geisel C."/>
            <person name="Layman D."/>
            <person name="Du H."/>
            <person name="Ali J."/>
            <person name="Berghoff A."/>
            <person name="Jones K."/>
            <person name="Drone K."/>
            <person name="Cotton M."/>
            <person name="Joshu C."/>
            <person name="Antonoiu B."/>
            <person name="Zidanic M."/>
            <person name="Strong C."/>
            <person name="Sun H."/>
            <person name="Lamar B."/>
            <person name="Yordan C."/>
            <person name="Ma P."/>
            <person name="Zhong J."/>
            <person name="Preston R."/>
            <person name="Vil D."/>
            <person name="Shekher M."/>
            <person name="Matero A."/>
            <person name="Shah R."/>
            <person name="Swaby I.K."/>
            <person name="O'Shaughnessy A."/>
            <person name="Rodriguez M."/>
            <person name="Hoffman J."/>
            <person name="Till S."/>
            <person name="Granat S."/>
            <person name="Shohdy N."/>
            <person name="Hasegawa A."/>
            <person name="Hameed A."/>
            <person name="Lodhi M."/>
            <person name="Johnson A."/>
            <person name="Chen E."/>
            <person name="Marra M.A."/>
            <person name="Martienssen R."/>
            <person name="McCombie W.R."/>
        </authorList>
    </citation>
    <scope>NUCLEOTIDE SEQUENCE [LARGE SCALE GENOMIC DNA]</scope>
    <source>
        <strain>cv. Columbia</strain>
    </source>
</reference>
<reference key="5">
    <citation type="journal article" date="2017" name="Plant J.">
        <title>Araport11: a complete reannotation of the Arabidopsis thaliana reference genome.</title>
        <authorList>
            <person name="Cheng C.Y."/>
            <person name="Krishnakumar V."/>
            <person name="Chan A.P."/>
            <person name="Thibaud-Nissen F."/>
            <person name="Schobel S."/>
            <person name="Town C.D."/>
        </authorList>
    </citation>
    <scope>GENOME REANNOTATION</scope>
    <source>
        <strain>cv. Columbia</strain>
    </source>
</reference>
<reference key="6">
    <citation type="journal article" date="2003" name="Science">
        <title>Empirical analysis of transcriptional activity in the Arabidopsis genome.</title>
        <authorList>
            <person name="Yamada K."/>
            <person name="Lim J."/>
            <person name="Dale J.M."/>
            <person name="Chen H."/>
            <person name="Shinn P."/>
            <person name="Palm C.J."/>
            <person name="Southwick A.M."/>
            <person name="Wu H.C."/>
            <person name="Kim C.J."/>
            <person name="Nguyen M."/>
            <person name="Pham P.K."/>
            <person name="Cheuk R.F."/>
            <person name="Karlin-Newmann G."/>
            <person name="Liu S.X."/>
            <person name="Lam B."/>
            <person name="Sakano H."/>
            <person name="Wu T."/>
            <person name="Yu G."/>
            <person name="Miranda M."/>
            <person name="Quach H.L."/>
            <person name="Tripp M."/>
            <person name="Chang C.H."/>
            <person name="Lee J.M."/>
            <person name="Toriumi M.J."/>
            <person name="Chan M.M."/>
            <person name="Tang C.C."/>
            <person name="Onodera C.S."/>
            <person name="Deng J.M."/>
            <person name="Akiyama K."/>
            <person name="Ansari Y."/>
            <person name="Arakawa T."/>
            <person name="Banh J."/>
            <person name="Banno F."/>
            <person name="Bowser L."/>
            <person name="Brooks S.Y."/>
            <person name="Carninci P."/>
            <person name="Chao Q."/>
            <person name="Choy N."/>
            <person name="Enju A."/>
            <person name="Goldsmith A.D."/>
            <person name="Gurjal M."/>
            <person name="Hansen N.F."/>
            <person name="Hayashizaki Y."/>
            <person name="Johnson-Hopson C."/>
            <person name="Hsuan V.W."/>
            <person name="Iida K."/>
            <person name="Karnes M."/>
            <person name="Khan S."/>
            <person name="Koesema E."/>
            <person name="Ishida J."/>
            <person name="Jiang P.X."/>
            <person name="Jones T."/>
            <person name="Kawai J."/>
            <person name="Kamiya A."/>
            <person name="Meyers C."/>
            <person name="Nakajima M."/>
            <person name="Narusaka M."/>
            <person name="Seki M."/>
            <person name="Sakurai T."/>
            <person name="Satou M."/>
            <person name="Tamse R."/>
            <person name="Vaysberg M."/>
            <person name="Wallender E.K."/>
            <person name="Wong C."/>
            <person name="Yamamura Y."/>
            <person name="Yuan S."/>
            <person name="Shinozaki K."/>
            <person name="Davis R.W."/>
            <person name="Theologis A."/>
            <person name="Ecker J.R."/>
        </authorList>
    </citation>
    <scope>NUCLEOTIDE SEQUENCE [LARGE SCALE MRNA] (ISOFORM 1)</scope>
    <source>
        <strain>cv. Columbia</strain>
    </source>
</reference>
<reference key="7">
    <citation type="journal article" date="2009" name="DNA Res.">
        <title>Analysis of multiple occurrences of alternative splicing events in Arabidopsis thaliana using novel sequenced full-length cDNAs.</title>
        <authorList>
            <person name="Iida K."/>
            <person name="Fukami-Kobayashi K."/>
            <person name="Toyoda A."/>
            <person name="Sakaki Y."/>
            <person name="Kobayashi M."/>
            <person name="Seki M."/>
            <person name="Shinozaki K."/>
        </authorList>
    </citation>
    <scope>NUCLEOTIDE SEQUENCE [LARGE SCALE MRNA] (ISOFORM 2)</scope>
    <source>
        <strain>cv. Columbia</strain>
    </source>
</reference>
<reference key="8">
    <citation type="submission" date="2006-07" db="EMBL/GenBank/DDBJ databases">
        <title>Large-scale analysis of RIKEN Arabidopsis full-length (RAFL) cDNAs.</title>
        <authorList>
            <person name="Totoki Y."/>
            <person name="Seki M."/>
            <person name="Ishida J."/>
            <person name="Nakajima M."/>
            <person name="Enju A."/>
            <person name="Kamiya A."/>
            <person name="Narusaka M."/>
            <person name="Shin-i T."/>
            <person name="Nakagawa M."/>
            <person name="Sakamoto N."/>
            <person name="Oishi K."/>
            <person name="Kohara Y."/>
            <person name="Kobayashi M."/>
            <person name="Toyoda A."/>
            <person name="Sakaki Y."/>
            <person name="Sakurai T."/>
            <person name="Iida K."/>
            <person name="Akiyama K."/>
            <person name="Satou M."/>
            <person name="Toyoda T."/>
            <person name="Konagaya A."/>
            <person name="Carninci P."/>
            <person name="Kawai J."/>
            <person name="Hayashizaki Y."/>
            <person name="Shinozaki K."/>
        </authorList>
    </citation>
    <scope>NUCLEOTIDE SEQUENCE [LARGE SCALE MRNA] (ISOFORM 1)</scope>
    <source>
        <strain>cv. Columbia</strain>
    </source>
</reference>
<reference key="9">
    <citation type="journal article" date="1995" name="Plant Physiol.">
        <title>Identification and characterization of a phloem-specific beta-amylase.</title>
        <authorList>
            <person name="Wang Q."/>
            <person name="Monroe J."/>
            <person name="Sjoelund R.D."/>
        </authorList>
    </citation>
    <scope>SUBCELLULAR LOCATION</scope>
    <scope>TISSUE SPECIFICITY</scope>
</reference>
<reference key="10">
    <citation type="journal article" date="2001" name="Plant Physiol.">
        <title>The ram1 mutant of Arabidopsis exhibits severely decreased beta-amylase activity.</title>
        <authorList>
            <person name="Laby R.J."/>
            <person name="Kim D."/>
            <person name="Gibson S.I."/>
        </authorList>
    </citation>
    <scope>FUNCTION</scope>
    <scope>DISRUPTION PHENOTYPE</scope>
</reference>
<reference key="11">
    <citation type="journal article" date="2008" name="Plant Cell">
        <title>Beta-AMYLASE4, a noncatalytic protein required for starch breakdown, acts upstream of three active beta-amylases in Arabidopsis chloroplasts.</title>
        <authorList>
            <person name="Fulton D.C."/>
            <person name="Stettler M."/>
            <person name="Mettler T."/>
            <person name="Vaughan C.K."/>
            <person name="Li J."/>
            <person name="Francisco P."/>
            <person name="Gil M."/>
            <person name="Reinhold H."/>
            <person name="Eicke S."/>
            <person name="Messerli G."/>
            <person name="Dorken G."/>
            <person name="Halliday K."/>
            <person name="Smith A.M."/>
            <person name="Smith S.M."/>
            <person name="Zeeman S.C."/>
        </authorList>
    </citation>
    <scope>GENE FAMILY</scope>
    <scope>NOMENCLATURE</scope>
</reference>
<name>BAM5_ARATH</name>
<proteinExistence type="evidence at transcript level"/>
<organism>
    <name type="scientific">Arabidopsis thaliana</name>
    <name type="common">Mouse-ear cress</name>
    <dbReference type="NCBI Taxonomy" id="3702"/>
    <lineage>
        <taxon>Eukaryota</taxon>
        <taxon>Viridiplantae</taxon>
        <taxon>Streptophyta</taxon>
        <taxon>Embryophyta</taxon>
        <taxon>Tracheophyta</taxon>
        <taxon>Spermatophyta</taxon>
        <taxon>Magnoliopsida</taxon>
        <taxon>eudicotyledons</taxon>
        <taxon>Gunneridae</taxon>
        <taxon>Pentapetalae</taxon>
        <taxon>rosids</taxon>
        <taxon>malvids</taxon>
        <taxon>Brassicales</taxon>
        <taxon>Brassicaceae</taxon>
        <taxon>Camelineae</taxon>
        <taxon>Arabidopsis</taxon>
    </lineage>
</organism>
<evidence type="ECO:0000250" key="1"/>
<evidence type="ECO:0000255" key="2">
    <source>
        <dbReference type="PROSITE-ProRule" id="PRU10050"/>
    </source>
</evidence>
<evidence type="ECO:0000269" key="3">
    <source>
    </source>
</evidence>
<evidence type="ECO:0000269" key="4">
    <source>
    </source>
</evidence>
<evidence type="ECO:0000303" key="5">
    <source>
    </source>
</evidence>
<evidence type="ECO:0000305" key="6"/>
<sequence>MATNYNEKLLLNYVPVYVMLPLGVVNVENVFADPETLETQLKRLKEEAGVDGVMVDVWWGIIESKGPKQYDWTAYKTLFQLIARLGLKIQAIMSFHQCGGNVGDIVTIPIPQWVRDVGDNDPDIYYTNRKGTRDIEYLSIGVDNLPLFAGRTAVQLYSDYMSSFKENMADLIEAGVIVDIEVGLGPAGELRYPSYPQSQGWVFPGIGEFQCYDKYLKKDFKEAAAKAGHPEWDLPEDAGEYNDKPEETGFFKKDGTYVSEKGKFFMTWYSNKLIFHGDQILGEANKIFAGLKVNLAAKVSGIHWLYNHHSHAAELTAGYYNLFKRDGYRPIARMLSKHYGILNFTCLEMKDTDNTAEALSAPQELVQEVLSKAWKEGIEVAGENALETYGAKGYNQILLNARPNGVNPNGKPKLRMYGFTYLRLSDTVFQENNFELFKKLVRKMHADQDYCGDAAKYGHEIVPLKTSNSQLTLEDIADAAQPSGAFKWDSETDLKVDG</sequence>
<dbReference type="EC" id="3.2.1.2"/>
<dbReference type="EMBL" id="M73467">
    <property type="protein sequence ID" value="AAA32737.1"/>
    <property type="molecule type" value="mRNA"/>
</dbReference>
<dbReference type="EMBL" id="D43783">
    <property type="protein sequence ID" value="BAA07842.1"/>
    <property type="molecule type" value="Genomic_DNA"/>
</dbReference>
<dbReference type="EMBL" id="S77076">
    <property type="protein sequence ID" value="AAB34026.1"/>
    <property type="molecule type" value="Genomic_DNA"/>
</dbReference>
<dbReference type="EMBL" id="Z97338">
    <property type="protein sequence ID" value="CAB10300.1"/>
    <property type="molecule type" value="Genomic_DNA"/>
</dbReference>
<dbReference type="EMBL" id="AL161540">
    <property type="protein sequence ID" value="CAB78563.1"/>
    <property type="molecule type" value="Genomic_DNA"/>
</dbReference>
<dbReference type="EMBL" id="CP002687">
    <property type="protein sequence ID" value="AEE83568.1"/>
    <property type="molecule type" value="Genomic_DNA"/>
</dbReference>
<dbReference type="EMBL" id="CP002687">
    <property type="protein sequence ID" value="AEE83569.1"/>
    <property type="molecule type" value="Genomic_DNA"/>
</dbReference>
<dbReference type="EMBL" id="AF424573">
    <property type="protein sequence ID" value="AAL11567.1"/>
    <property type="molecule type" value="mRNA"/>
</dbReference>
<dbReference type="EMBL" id="AY142024">
    <property type="protein sequence ID" value="AAM98288.1"/>
    <property type="molecule type" value="mRNA"/>
</dbReference>
<dbReference type="EMBL" id="AK316869">
    <property type="protein sequence ID" value="BAH19577.1"/>
    <property type="molecule type" value="mRNA"/>
</dbReference>
<dbReference type="EMBL" id="AK226353">
    <property type="protein sequence ID" value="BAE98501.1"/>
    <property type="molecule type" value="mRNA"/>
</dbReference>
<dbReference type="PIR" id="B71416">
    <property type="entry name" value="S36094"/>
</dbReference>
<dbReference type="RefSeq" id="NP_567460.1">
    <molecule id="P25853-1"/>
    <property type="nucleotide sequence ID" value="NM_117609.3"/>
</dbReference>
<dbReference type="RefSeq" id="NP_849389.1">
    <molecule id="P25853-2"/>
    <property type="nucleotide sequence ID" value="NM_179058.1"/>
</dbReference>
<dbReference type="SMR" id="P25853"/>
<dbReference type="FunCoup" id="P25853">
    <property type="interactions" value="180"/>
</dbReference>
<dbReference type="STRING" id="3702.P25853"/>
<dbReference type="CAZy" id="GH14">
    <property type="family name" value="Glycoside Hydrolase Family 14"/>
</dbReference>
<dbReference type="iPTMnet" id="P25853"/>
<dbReference type="PaxDb" id="3702-AT4G15210.1"/>
<dbReference type="ProteomicsDB" id="241124">
    <molecule id="P25853-1"/>
</dbReference>
<dbReference type="EnsemblPlants" id="AT4G15210.1">
    <molecule id="P25853-1"/>
    <property type="protein sequence ID" value="AT4G15210.1"/>
    <property type="gene ID" value="AT4G15210"/>
</dbReference>
<dbReference type="EnsemblPlants" id="AT4G15210.2">
    <molecule id="P25853-2"/>
    <property type="protein sequence ID" value="AT4G15210.2"/>
    <property type="gene ID" value="AT4G15210"/>
</dbReference>
<dbReference type="GeneID" id="827185"/>
<dbReference type="Gramene" id="AT4G15210.1">
    <molecule id="P25853-1"/>
    <property type="protein sequence ID" value="AT4G15210.1"/>
    <property type="gene ID" value="AT4G15210"/>
</dbReference>
<dbReference type="Gramene" id="AT4G15210.2">
    <molecule id="P25853-2"/>
    <property type="protein sequence ID" value="AT4G15210.2"/>
    <property type="gene ID" value="AT4G15210"/>
</dbReference>
<dbReference type="KEGG" id="ath:AT4G15210"/>
<dbReference type="Araport" id="AT4G15210"/>
<dbReference type="TAIR" id="AT4G15210">
    <property type="gene designation" value="BAM5"/>
</dbReference>
<dbReference type="eggNOG" id="ENOG502QUU5">
    <property type="taxonomic scope" value="Eukaryota"/>
</dbReference>
<dbReference type="InParanoid" id="P25853"/>
<dbReference type="OMA" id="GDRNKEY"/>
<dbReference type="OrthoDB" id="1660156at2759"/>
<dbReference type="PhylomeDB" id="P25853"/>
<dbReference type="PRO" id="PR:P25853"/>
<dbReference type="Proteomes" id="UP000006548">
    <property type="component" value="Chromosome 4"/>
</dbReference>
<dbReference type="ExpressionAtlas" id="P25853">
    <property type="expression patterns" value="baseline and differential"/>
</dbReference>
<dbReference type="GO" id="GO:0099503">
    <property type="term" value="C:secretory vesicle"/>
    <property type="evidence" value="ECO:0007005"/>
    <property type="project" value="TAIR"/>
</dbReference>
<dbReference type="GO" id="GO:0016161">
    <property type="term" value="F:beta-amylase activity"/>
    <property type="evidence" value="ECO:0000314"/>
    <property type="project" value="TAIR"/>
</dbReference>
<dbReference type="GO" id="GO:0080027">
    <property type="term" value="P:response to herbivore"/>
    <property type="evidence" value="ECO:0000270"/>
    <property type="project" value="TAIR"/>
</dbReference>
<dbReference type="GO" id="GO:0005983">
    <property type="term" value="P:starch catabolic process"/>
    <property type="evidence" value="ECO:0000314"/>
    <property type="project" value="TAIR"/>
</dbReference>
<dbReference type="FunFam" id="3.20.20.80:FF:000066">
    <property type="entry name" value="Beta-amylase"/>
    <property type="match status" value="1"/>
</dbReference>
<dbReference type="Gene3D" id="3.20.20.80">
    <property type="entry name" value="Glycosidases"/>
    <property type="match status" value="1"/>
</dbReference>
<dbReference type="InterPro" id="IPR001554">
    <property type="entry name" value="Glyco_hydro_14"/>
</dbReference>
<dbReference type="InterPro" id="IPR018238">
    <property type="entry name" value="Glyco_hydro_14_CS"/>
</dbReference>
<dbReference type="InterPro" id="IPR001371">
    <property type="entry name" value="Glyco_hydro_14B_pln"/>
</dbReference>
<dbReference type="InterPro" id="IPR017853">
    <property type="entry name" value="Glycoside_hydrolase_SF"/>
</dbReference>
<dbReference type="PANTHER" id="PTHR31352">
    <property type="entry name" value="BETA-AMYLASE 1, CHLOROPLASTIC"/>
    <property type="match status" value="1"/>
</dbReference>
<dbReference type="PANTHER" id="PTHR31352:SF55">
    <property type="entry name" value="BETA-AMYLASE 5"/>
    <property type="match status" value="1"/>
</dbReference>
<dbReference type="Pfam" id="PF01373">
    <property type="entry name" value="Glyco_hydro_14"/>
    <property type="match status" value="1"/>
</dbReference>
<dbReference type="PRINTS" id="PR00750">
    <property type="entry name" value="BETAAMYLASE"/>
</dbReference>
<dbReference type="PRINTS" id="PR00842">
    <property type="entry name" value="GLHYDLASE14B"/>
</dbReference>
<dbReference type="SUPFAM" id="SSF51445">
    <property type="entry name" value="(Trans)glycosidases"/>
    <property type="match status" value="1"/>
</dbReference>
<dbReference type="PROSITE" id="PS00506">
    <property type="entry name" value="BETA_AMYLASE_1"/>
    <property type="match status" value="1"/>
</dbReference>
<dbReference type="PROSITE" id="PS00679">
    <property type="entry name" value="BETA_AMYLASE_2"/>
    <property type="match status" value="1"/>
</dbReference>
<protein>
    <recommendedName>
        <fullName>Beta-amylase 5</fullName>
        <shortName>AtBeta-Amy</shortName>
        <ecNumber>3.2.1.2</ecNumber>
    </recommendedName>
    <alternativeName>
        <fullName>1,4-alpha-D-glucan maltohydrolase</fullName>
    </alternativeName>
    <alternativeName>
        <fullName>Protein REDUCED BETA AMYLASE 1</fullName>
    </alternativeName>
</protein>
<accession>P25853</accession>
<accession>O23375</accession>
<accession>Q0WWJ7</accession>
<accession>Q3EA19</accession>
<feature type="chain" id="PRO_0000153932" description="Beta-amylase 5">
    <location>
        <begin position="1"/>
        <end position="498"/>
    </location>
</feature>
<feature type="active site" description="Proton donor" evidence="2">
    <location>
        <position position="189"/>
    </location>
</feature>
<feature type="active site" description="Proton acceptor" evidence="2">
    <location>
        <position position="383"/>
    </location>
</feature>
<feature type="binding site" evidence="1">
    <location>
        <position position="56"/>
    </location>
    <ligand>
        <name>substrate</name>
    </ligand>
</feature>
<feature type="binding site" evidence="1">
    <location>
        <position position="96"/>
    </location>
    <ligand>
        <name>substrate</name>
    </ligand>
</feature>
<feature type="binding site" evidence="1">
    <location>
        <position position="104"/>
    </location>
    <ligand>
        <name>substrate</name>
    </ligand>
</feature>
<feature type="binding site" evidence="1">
    <location>
        <position position="298"/>
    </location>
    <ligand>
        <name>substrate</name>
    </ligand>
</feature>
<feature type="binding site" evidence="1">
    <location>
        <position position="303"/>
    </location>
    <ligand>
        <name>substrate</name>
    </ligand>
</feature>
<feature type="binding site" evidence="1">
    <location>
        <position position="345"/>
    </location>
    <ligand>
        <name>substrate</name>
    </ligand>
</feature>
<feature type="binding site" evidence="1">
    <location>
        <begin position="384"/>
        <end position="385"/>
    </location>
    <ligand>
        <name>substrate</name>
    </ligand>
</feature>
<feature type="binding site" evidence="1">
    <location>
        <position position="423"/>
    </location>
    <ligand>
        <name>substrate</name>
    </ligand>
</feature>
<feature type="splice variant" id="VSP_038978" description="In isoform 2." evidence="5">
    <original>KPKLRMYGFT</original>
    <variation>LLWRRSEVRA</variation>
    <location>
        <begin position="411"/>
        <end position="420"/>
    </location>
</feature>
<feature type="splice variant" id="VSP_038979" description="In isoform 2." evidence="5">
    <location>
        <begin position="421"/>
        <end position="498"/>
    </location>
</feature>
<feature type="sequence conflict" description="In Ref. 3; CAB10300 and 4; CAB78563." evidence="6" ref="3 4">
    <original>Q</original>
    <variation>QV</variation>
    <location>
        <position position="155"/>
    </location>
</feature>
<feature type="sequence conflict" description="In Ref. 2; BAA07842/AAB34026." evidence="6" ref="2">
    <original>F</original>
    <variation>L</variation>
    <location>
        <position position="486"/>
    </location>
</feature>
<comment type="function">
    <text evidence="3">Beta-amylase activity. Major cytosolic beta-amylase isoform in rosette leaves and inflorescences stems.</text>
</comment>
<comment type="catalytic activity">
    <reaction>
        <text>Hydrolysis of (1-&gt;4)-alpha-D-glucosidic linkages in polysaccharides so as to remove successive maltose units from the non-reducing ends of the chains.</text>
        <dbReference type="EC" id="3.2.1.2"/>
    </reaction>
</comment>
<comment type="subcellular location">
    <subcellularLocation>
        <location evidence="4">Cytoplasm</location>
    </subcellularLocation>
    <text>Present in the continuous phloem cytoplasm.</text>
</comment>
<comment type="alternative products">
    <event type="alternative splicing"/>
    <isoform>
        <id>P25853-1</id>
        <name>1</name>
        <sequence type="displayed"/>
    </isoform>
    <isoform>
        <id>P25853-2</id>
        <name>2</name>
        <sequence type="described" ref="VSP_038978 VSP_038979"/>
    </isoform>
</comment>
<comment type="tissue specificity">
    <text evidence="4">Detected in phloem sieve elements.</text>
</comment>
<comment type="induction">
    <text>Circadian-regulated, with a peak in expression just before the light period in short day conditions.</text>
</comment>
<comment type="disruption phenotype">
    <text evidence="3">Almost complete loss of beta-amylase activity in rosette leaves and inflorescences (stems).</text>
</comment>
<comment type="similarity">
    <text evidence="6">Belongs to the glycosyl hydrolase 14 family.</text>
</comment>